<evidence type="ECO:0000255" key="1">
    <source>
        <dbReference type="HAMAP-Rule" id="MF_00593"/>
    </source>
</evidence>
<evidence type="ECO:0000305" key="2"/>
<proteinExistence type="inferred from homology"/>
<feature type="chain" id="PRO_0000213148" description="D-alanine--D-alanyl carrier protein ligase">
    <location>
        <begin position="1"/>
        <end position="510"/>
    </location>
</feature>
<feature type="binding site" evidence="1">
    <location>
        <begin position="157"/>
        <end position="158"/>
    </location>
    <ligand>
        <name>ATP</name>
        <dbReference type="ChEBI" id="CHEBI:30616"/>
    </ligand>
</feature>
<feature type="binding site" evidence="1">
    <location>
        <position position="202"/>
    </location>
    <ligand>
        <name>D-alanine</name>
        <dbReference type="ChEBI" id="CHEBI:57416"/>
    </ligand>
</feature>
<feature type="binding site" evidence="1">
    <location>
        <begin position="297"/>
        <end position="302"/>
    </location>
    <ligand>
        <name>ATP</name>
        <dbReference type="ChEBI" id="CHEBI:30616"/>
    </ligand>
</feature>
<feature type="binding site" evidence="1">
    <location>
        <position position="306"/>
    </location>
    <ligand>
        <name>D-alanine</name>
        <dbReference type="ChEBI" id="CHEBI:57416"/>
    </ligand>
</feature>
<feature type="binding site" evidence="1">
    <location>
        <position position="389"/>
    </location>
    <ligand>
        <name>ATP</name>
        <dbReference type="ChEBI" id="CHEBI:30616"/>
    </ligand>
</feature>
<feature type="binding site" evidence="1">
    <location>
        <position position="498"/>
    </location>
    <ligand>
        <name>ATP</name>
        <dbReference type="ChEBI" id="CHEBI:30616"/>
    </ligand>
</feature>
<feature type="binding site" evidence="1">
    <location>
        <position position="498"/>
    </location>
    <ligand>
        <name>D-alanine</name>
        <dbReference type="ChEBI" id="CHEBI:57416"/>
    </ligand>
</feature>
<feature type="sequence conflict" description="In Ref. 1; CAB51919." evidence="2" ref="1">
    <original>I</original>
    <variation>V</variation>
    <location>
        <position position="499"/>
    </location>
</feature>
<gene>
    <name evidence="1" type="primary">dltA</name>
    <name type="ordered locus">lmo0974</name>
</gene>
<name>DLTA_LISMO</name>
<accession>Q8Y8D4</accession>
<accession>Q9S391</accession>
<organism>
    <name type="scientific">Listeria monocytogenes serovar 1/2a (strain ATCC BAA-679 / EGD-e)</name>
    <dbReference type="NCBI Taxonomy" id="169963"/>
    <lineage>
        <taxon>Bacteria</taxon>
        <taxon>Bacillati</taxon>
        <taxon>Bacillota</taxon>
        <taxon>Bacilli</taxon>
        <taxon>Bacillales</taxon>
        <taxon>Listeriaceae</taxon>
        <taxon>Listeria</taxon>
    </lineage>
</organism>
<keyword id="KW-0067">ATP-binding</keyword>
<keyword id="KW-0963">Cytoplasm</keyword>
<keyword id="KW-0436">Ligase</keyword>
<keyword id="KW-0547">Nucleotide-binding</keyword>
<keyword id="KW-1185">Reference proteome</keyword>
<keyword id="KW-0843">Virulence</keyword>
<protein>
    <recommendedName>
        <fullName evidence="1">D-alanine--D-alanyl carrier protein ligase</fullName>
        <shortName evidence="1">DCL</shortName>
        <ecNumber evidence="1">6.2.1.54</ecNumber>
    </recommendedName>
    <alternativeName>
        <fullName evidence="1">D-alanine--poly(phosphoribitol) ligase subunit 1</fullName>
    </alternativeName>
    <alternativeName>
        <fullName evidence="1">D-alanine-activating enzyme</fullName>
        <shortName evidence="1">DAE</shortName>
    </alternativeName>
</protein>
<reference key="1">
    <citation type="journal article" date="2002" name="Mol. Microbiol.">
        <title>Formation of D-alanyl-lipoteichoic acid is required for adhesion and virulence of Listeria monocytogenes.</title>
        <authorList>
            <person name="Abachin E."/>
            <person name="Poyart C."/>
            <person name="Pellegrini E."/>
            <person name="Milohanic E."/>
            <person name="Fiedler F."/>
            <person name="Berche P."/>
            <person name="Trieu-Cuot P."/>
        </authorList>
    </citation>
    <scope>NUCLEOTIDE SEQUENCE [GENOMIC DNA]</scope>
    <source>
        <strain>LO28 / Serovar 1/2c</strain>
    </source>
</reference>
<reference key="2">
    <citation type="journal article" date="2001" name="Science">
        <title>Comparative genomics of Listeria species.</title>
        <authorList>
            <person name="Glaser P."/>
            <person name="Frangeul L."/>
            <person name="Buchrieser C."/>
            <person name="Rusniok C."/>
            <person name="Amend A."/>
            <person name="Baquero F."/>
            <person name="Berche P."/>
            <person name="Bloecker H."/>
            <person name="Brandt P."/>
            <person name="Chakraborty T."/>
            <person name="Charbit A."/>
            <person name="Chetouani F."/>
            <person name="Couve E."/>
            <person name="de Daruvar A."/>
            <person name="Dehoux P."/>
            <person name="Domann E."/>
            <person name="Dominguez-Bernal G."/>
            <person name="Duchaud E."/>
            <person name="Durant L."/>
            <person name="Dussurget O."/>
            <person name="Entian K.-D."/>
            <person name="Fsihi H."/>
            <person name="Garcia-del Portillo F."/>
            <person name="Garrido P."/>
            <person name="Gautier L."/>
            <person name="Goebel W."/>
            <person name="Gomez-Lopez N."/>
            <person name="Hain T."/>
            <person name="Hauf J."/>
            <person name="Jackson D."/>
            <person name="Jones L.-M."/>
            <person name="Kaerst U."/>
            <person name="Kreft J."/>
            <person name="Kuhn M."/>
            <person name="Kunst F."/>
            <person name="Kurapkat G."/>
            <person name="Madueno E."/>
            <person name="Maitournam A."/>
            <person name="Mata Vicente J."/>
            <person name="Ng E."/>
            <person name="Nedjari H."/>
            <person name="Nordsiek G."/>
            <person name="Novella S."/>
            <person name="de Pablos B."/>
            <person name="Perez-Diaz J.-C."/>
            <person name="Purcell R."/>
            <person name="Remmel B."/>
            <person name="Rose M."/>
            <person name="Schlueter T."/>
            <person name="Simoes N."/>
            <person name="Tierrez A."/>
            <person name="Vazquez-Boland J.-A."/>
            <person name="Voss H."/>
            <person name="Wehland J."/>
            <person name="Cossart P."/>
        </authorList>
    </citation>
    <scope>NUCLEOTIDE SEQUENCE [LARGE SCALE GENOMIC DNA]</scope>
    <source>
        <strain>ATCC BAA-679 / EGD-e</strain>
    </source>
</reference>
<sequence length="510" mass="57762">MTTSIIERIDAWAEKTPDFPCYEYAGTRLSYKELKRQSDAFGSFLLKNLITDKEKPIIVYGHMSPLMLVAFLGSIKSGRAYVPVDVSMPVERIEQIKKAADPSMFICTEELPNNLTITGCPVLTQDQLMDALEKHFGEVPDKEACVNNDDNYYIIYTSGSTGNPKGVQISQNNLVSFSNWILQDFSLSQGLRFLNQAPFSFDLSVMDLYPSLLSGGTLVPLDKTITANMKDLYREIPAQNLDVWVSTPSFADLCLLDENFNQENNPRLTRFLFCGEVLAKKTASELLDRFPDAVIYNTYGPTEATVAVTQVKVTREIIDAYPSLPLGVIKPDMRLHIVDQETGEVLPEGEKGEIVLIGASVSKGYLNEPEKTDQVFFDYKGYQAYRTGDSGIIKDGYLFFQGRLDFQIKLHGYRIELEDIENNLKKVSYIQNCAIIPKMKDEKVDMLVAQVIPTTHDFEKEYQLSAAIKKELKEFMPAYMIPRKWIYKTDFPLTMNGKIDRKSLNSEVNK</sequence>
<dbReference type="EC" id="6.2.1.54" evidence="1"/>
<dbReference type="EMBL" id="AJ012255">
    <property type="protein sequence ID" value="CAB51919.1"/>
    <property type="status" value="ALT_INIT"/>
    <property type="molecule type" value="Genomic_DNA"/>
</dbReference>
<dbReference type="EMBL" id="AL591977">
    <property type="protein sequence ID" value="CAC99052.1"/>
    <property type="molecule type" value="Genomic_DNA"/>
</dbReference>
<dbReference type="PIR" id="AF1196">
    <property type="entry name" value="AF1196"/>
</dbReference>
<dbReference type="RefSeq" id="NP_464499.1">
    <property type="nucleotide sequence ID" value="NC_003210.1"/>
</dbReference>
<dbReference type="RefSeq" id="WP_003732429.1">
    <property type="nucleotide sequence ID" value="NZ_CP149495.1"/>
</dbReference>
<dbReference type="SMR" id="Q8Y8D4"/>
<dbReference type="STRING" id="169963.gene:17593630"/>
<dbReference type="PaxDb" id="169963-lmo0974"/>
<dbReference type="EnsemblBacteria" id="CAC99052">
    <property type="protein sequence ID" value="CAC99052"/>
    <property type="gene ID" value="CAC99052"/>
</dbReference>
<dbReference type="GeneID" id="986449"/>
<dbReference type="KEGG" id="lmo:lmo0974"/>
<dbReference type="PATRIC" id="fig|169963.11.peg.1001"/>
<dbReference type="eggNOG" id="COG1020">
    <property type="taxonomic scope" value="Bacteria"/>
</dbReference>
<dbReference type="HOGENOM" id="CLU_000022_2_12_9"/>
<dbReference type="OrthoDB" id="9765680at2"/>
<dbReference type="PhylomeDB" id="Q8Y8D4"/>
<dbReference type="BioCyc" id="LMON169963:LMO0974-MONOMER"/>
<dbReference type="UniPathway" id="UPA00556"/>
<dbReference type="Proteomes" id="UP000000817">
    <property type="component" value="Chromosome"/>
</dbReference>
<dbReference type="GO" id="GO:0005737">
    <property type="term" value="C:cytoplasm"/>
    <property type="evidence" value="ECO:0007669"/>
    <property type="project" value="UniProtKB-SubCell"/>
</dbReference>
<dbReference type="GO" id="GO:0005524">
    <property type="term" value="F:ATP binding"/>
    <property type="evidence" value="ECO:0007669"/>
    <property type="project" value="UniProtKB-KW"/>
</dbReference>
<dbReference type="GO" id="GO:0047473">
    <property type="term" value="F:D-alanine [D-alanyl carrier protein] ligase activity"/>
    <property type="evidence" value="ECO:0007669"/>
    <property type="project" value="UniProtKB-UniRule"/>
</dbReference>
<dbReference type="GO" id="GO:0070395">
    <property type="term" value="P:lipoteichoic acid biosynthetic process"/>
    <property type="evidence" value="ECO:0007669"/>
    <property type="project" value="UniProtKB-UniRule"/>
</dbReference>
<dbReference type="CDD" id="cd05945">
    <property type="entry name" value="DltA"/>
    <property type="match status" value="1"/>
</dbReference>
<dbReference type="FunFam" id="3.30.300.30:FF:000012">
    <property type="entry name" value="D-alanine--D-alanyl carrier protein ligase"/>
    <property type="match status" value="1"/>
</dbReference>
<dbReference type="Gene3D" id="3.30.300.30">
    <property type="match status" value="1"/>
</dbReference>
<dbReference type="Gene3D" id="3.40.50.12780">
    <property type="entry name" value="N-terminal domain of ligase-like"/>
    <property type="match status" value="1"/>
</dbReference>
<dbReference type="HAMAP" id="MF_00593">
    <property type="entry name" value="DltA"/>
    <property type="match status" value="1"/>
</dbReference>
<dbReference type="InterPro" id="IPR010071">
    <property type="entry name" value="AA_adenyl_dom"/>
</dbReference>
<dbReference type="InterPro" id="IPR025110">
    <property type="entry name" value="AMP-bd_C"/>
</dbReference>
<dbReference type="InterPro" id="IPR045851">
    <property type="entry name" value="AMP-bd_C_sf"/>
</dbReference>
<dbReference type="InterPro" id="IPR020845">
    <property type="entry name" value="AMP-binding_CS"/>
</dbReference>
<dbReference type="InterPro" id="IPR000873">
    <property type="entry name" value="AMP-dep_synth/lig_dom"/>
</dbReference>
<dbReference type="InterPro" id="IPR042099">
    <property type="entry name" value="ANL_N_sf"/>
</dbReference>
<dbReference type="InterPro" id="IPR010072">
    <property type="entry name" value="DltA"/>
</dbReference>
<dbReference type="InterPro" id="IPR044507">
    <property type="entry name" value="DltA-like"/>
</dbReference>
<dbReference type="NCBIfam" id="TIGR01733">
    <property type="entry name" value="AA-adenyl-dom"/>
    <property type="match status" value="1"/>
</dbReference>
<dbReference type="NCBIfam" id="TIGR01734">
    <property type="entry name" value="D-ala-DACP-lig"/>
    <property type="match status" value="1"/>
</dbReference>
<dbReference type="NCBIfam" id="NF003417">
    <property type="entry name" value="PRK04813.1"/>
    <property type="match status" value="1"/>
</dbReference>
<dbReference type="PANTHER" id="PTHR45398">
    <property type="match status" value="1"/>
</dbReference>
<dbReference type="PANTHER" id="PTHR45398:SF1">
    <property type="entry name" value="ENZYME, PUTATIVE (JCVI)-RELATED"/>
    <property type="match status" value="1"/>
</dbReference>
<dbReference type="Pfam" id="PF00501">
    <property type="entry name" value="AMP-binding"/>
    <property type="match status" value="1"/>
</dbReference>
<dbReference type="Pfam" id="PF13193">
    <property type="entry name" value="AMP-binding_C"/>
    <property type="match status" value="1"/>
</dbReference>
<dbReference type="SUPFAM" id="SSF56801">
    <property type="entry name" value="Acetyl-CoA synthetase-like"/>
    <property type="match status" value="1"/>
</dbReference>
<dbReference type="PROSITE" id="PS00455">
    <property type="entry name" value="AMP_BINDING"/>
    <property type="match status" value="1"/>
</dbReference>
<comment type="function">
    <text evidence="1">Catalyzes the first step in the D-alanylation of lipoteichoic acid (LTA), the activation of D-alanine and its transfer onto the D-alanyl carrier protein (Dcp) DltC. In an ATP-dependent two-step reaction, forms a high energy D-alanyl-AMP intermediate, followed by transfer of the D-alanyl residue as a thiol ester to the phosphopantheinyl prosthetic group of the Dcp. D-alanylation of LTA plays an important role in modulating the properties of the cell wall in Gram-positive bacteria, influencing the net charge of the cell wall.</text>
</comment>
<comment type="catalytic activity">
    <reaction evidence="1">
        <text>holo-[D-alanyl-carrier protein] + D-alanine + ATP = D-alanyl-[D-alanyl-carrier protein] + AMP + diphosphate</text>
        <dbReference type="Rhea" id="RHEA:55132"/>
        <dbReference type="Rhea" id="RHEA-COMP:14102"/>
        <dbReference type="Rhea" id="RHEA-COMP:14103"/>
        <dbReference type="ChEBI" id="CHEBI:30616"/>
        <dbReference type="ChEBI" id="CHEBI:33019"/>
        <dbReference type="ChEBI" id="CHEBI:57416"/>
        <dbReference type="ChEBI" id="CHEBI:64479"/>
        <dbReference type="ChEBI" id="CHEBI:138620"/>
        <dbReference type="ChEBI" id="CHEBI:456215"/>
        <dbReference type="EC" id="6.2.1.54"/>
    </reaction>
</comment>
<comment type="pathway">
    <text evidence="1">Cell wall biogenesis; lipoteichoic acid biosynthesis.</text>
</comment>
<comment type="subcellular location">
    <subcellularLocation>
        <location evidence="1">Cytoplasm</location>
    </subcellularLocation>
</comment>
<comment type="similarity">
    <text evidence="1">Belongs to the ATP-dependent AMP-binding enzyme family. DltA subfamily.</text>
</comment>
<comment type="sequence caution" evidence="2">
    <conflict type="erroneous initiation">
        <sequence resource="EMBL-CDS" id="CAB51919"/>
    </conflict>
</comment>